<keyword id="KW-0966">Cell projection</keyword>
<keyword id="KW-0378">Hydrolase</keyword>
<keyword id="KW-0479">Metal-binding</keyword>
<keyword id="KW-0482">Metalloprotease</keyword>
<keyword id="KW-0496">Mitochondrion</keyword>
<keyword id="KW-0597">Phosphoprotein</keyword>
<keyword id="KW-0645">Protease</keyword>
<keyword id="KW-1185">Reference proteome</keyword>
<keyword id="KW-0732">Signal</keyword>
<keyword id="KW-0862">Zinc</keyword>
<reference key="1">
    <citation type="submission" date="2004-11" db="EMBL/GenBank/DDBJ databases">
        <authorList>
            <consortium name="The German cDNA consortium"/>
        </authorList>
    </citation>
    <scope>NUCLEOTIDE SEQUENCE [LARGE SCALE MRNA]</scope>
    <source>
        <tissue>Brain cortex</tissue>
    </source>
</reference>
<sequence length="1152" mass="131682">MLRKVTVAAVCATRRKLCEAGRELAALWGIETRGRCEDSAAVRPFPILAMPGRNKAKSTCSCPDLQPNGQDLGENSRVARLGADESEEEGRRGSLSNAGDPEIVKSPSDPKQYRYIKLQNGLQALLISDLSNMEGKTGNTTDDEEEEEVEEEEEDDDEDSGAEIEDDDEEGFDDEDEFDDEHDDDLDTEDNELEELEERAEARKKKTTEKQSAAALCVGVGSFADPDDLPGLAHFLEHMVFMGSLKYPDENGFDAFLKKHGGSDNASTDCERTVFQFDVQRKYFKEALDRWAQFFIHPLMIRDAIDREVEAVDSEYQLARPSDANRKEMLFGSLARPGHPMGKFFWGNAETLKHEPKKNNIDTHARLREFWLRYYSAHYMTLVVQSKETLDTLEKWVTEIFSQIPNNGLPRPNFGHLTDPFDTPAFNKLYRVVPIRKIHALTITWALPPQQQHYRVKPLHYISWLVGHEGKGSILSFLRKKCWALALFGGNGETGFEQNSTYSVFSISITLTDEGYEHFYEVAYTVFQYLKMLQKLGPEKRIFEEIQKIEDNEFHYQEQTDPVEYVENMCENMQPYPLQDILTGDQLLFEYKPEVIGEALNQLVPQKANLVLLSGANEGKCDLKEKWFGTQYSIEDIENSWAELWNSNFELNPDLHLPAENKYIATDFTLKAFDCPETEYPVKIVNTPQGCLWYKKDNKFKIPKAYIRFHLISPLIQRSAANVVLFDIFANILTHNLAEPAYEADVAQLEYKLVAGEHGLIIRVKGFNHKLPLLFQLIVDYLAEFNSTPAVFTMITEQLKKTYFNILIKPETLAKDVRLLILEYARWSMIDKYQALMDGLSLESLLSFVKEFKSQLFVEGLVQGNVTSTESMDFLKYVVDKLNFKPLEQEMPVQFQVVELPSGHHLCKVKALNKGDANSEVTVYYQSGTRSLREYTLMELLVMHMEEPCFDFLRTKQTLGYHVYPTCRSTSGILGFSVTVGTQATKYNSEVVDKKIEEFLSSFEEKIENLTEEAFNTQVTALIKLKECEDTHLGEEVDRNWNEVVTQQYLFDRLAHEIEALKSFSKSDLVNWFKAHRGPGSKMLSVHVVGYGKYELEEDGTPSSEDSNSSCEVMQLTYLPTSPLLADCIIPITDIRAFTTTLNLLPYHKIVK</sequence>
<proteinExistence type="evidence at transcript level"/>
<accession>Q5R4H6</accession>
<gene>
    <name evidence="2" type="primary">NRDC</name>
    <name type="synonym">NRD1</name>
</gene>
<protein>
    <recommendedName>
        <fullName>Nardilysin</fullName>
        <ecNumber>3.4.24.61</ecNumber>
    </recommendedName>
    <alternativeName>
        <fullName>N-arginine dibasic convertase</fullName>
        <shortName>NRD convertase</shortName>
        <shortName>NRD-C</shortName>
    </alternativeName>
    <alternativeName>
        <fullName evidence="2">Nardilysin convertase</fullName>
    </alternativeName>
</protein>
<dbReference type="EC" id="3.4.24.61"/>
<dbReference type="EMBL" id="CR861272">
    <property type="protein sequence ID" value="CAH93340.1"/>
    <property type="molecule type" value="mRNA"/>
</dbReference>
<dbReference type="SMR" id="Q5R4H6"/>
<dbReference type="FunCoup" id="Q5R4H6">
    <property type="interactions" value="2012"/>
</dbReference>
<dbReference type="STRING" id="9601.ENSPPYP00000001576"/>
<dbReference type="MEROPS" id="M16.005"/>
<dbReference type="eggNOG" id="KOG0959">
    <property type="taxonomic scope" value="Eukaryota"/>
</dbReference>
<dbReference type="InParanoid" id="Q5R4H6"/>
<dbReference type="Proteomes" id="UP000001595">
    <property type="component" value="Unplaced"/>
</dbReference>
<dbReference type="GO" id="GO:0030425">
    <property type="term" value="C:dendrite"/>
    <property type="evidence" value="ECO:0007669"/>
    <property type="project" value="UniProtKB-SubCell"/>
</dbReference>
<dbReference type="GO" id="GO:0005739">
    <property type="term" value="C:mitochondrion"/>
    <property type="evidence" value="ECO:0007669"/>
    <property type="project" value="UniProtKB-SubCell"/>
</dbReference>
<dbReference type="GO" id="GO:0046872">
    <property type="term" value="F:metal ion binding"/>
    <property type="evidence" value="ECO:0007669"/>
    <property type="project" value="UniProtKB-KW"/>
</dbReference>
<dbReference type="GO" id="GO:0004222">
    <property type="term" value="F:metalloendopeptidase activity"/>
    <property type="evidence" value="ECO:0007669"/>
    <property type="project" value="UniProtKB-EC"/>
</dbReference>
<dbReference type="GO" id="GO:0050772">
    <property type="term" value="P:positive regulation of axonogenesis"/>
    <property type="evidence" value="ECO:0000250"/>
    <property type="project" value="UniProtKB"/>
</dbReference>
<dbReference type="GO" id="GO:0051044">
    <property type="term" value="P:positive regulation of membrane protein ectodomain proteolysis"/>
    <property type="evidence" value="ECO:0000250"/>
    <property type="project" value="UniProtKB"/>
</dbReference>
<dbReference type="GO" id="GO:0031643">
    <property type="term" value="P:positive regulation of myelination"/>
    <property type="evidence" value="ECO:0000250"/>
    <property type="project" value="UniProtKB"/>
</dbReference>
<dbReference type="GO" id="GO:0006508">
    <property type="term" value="P:proteolysis"/>
    <property type="evidence" value="ECO:0007669"/>
    <property type="project" value="UniProtKB-KW"/>
</dbReference>
<dbReference type="FunFam" id="3.30.830.10:FF:000005">
    <property type="entry name" value="nardilysin isoform X1"/>
    <property type="match status" value="1"/>
</dbReference>
<dbReference type="FunFam" id="3.30.830.10:FF:000017">
    <property type="entry name" value="nardilysin isoform X1"/>
    <property type="match status" value="1"/>
</dbReference>
<dbReference type="FunFam" id="3.30.830.10:FF:000019">
    <property type="entry name" value="nardilysin isoform X1"/>
    <property type="match status" value="1"/>
</dbReference>
<dbReference type="Gene3D" id="3.30.830.10">
    <property type="entry name" value="Metalloenzyme, LuxS/M16 peptidase-like"/>
    <property type="match status" value="4"/>
</dbReference>
<dbReference type="InterPro" id="IPR011249">
    <property type="entry name" value="Metalloenz_LuxS/M16"/>
</dbReference>
<dbReference type="InterPro" id="IPR011765">
    <property type="entry name" value="Pept_M16_N"/>
</dbReference>
<dbReference type="InterPro" id="IPR001431">
    <property type="entry name" value="Pept_M16_Zn_BS"/>
</dbReference>
<dbReference type="InterPro" id="IPR050626">
    <property type="entry name" value="Peptidase_M16"/>
</dbReference>
<dbReference type="InterPro" id="IPR007863">
    <property type="entry name" value="Peptidase_M16_C"/>
</dbReference>
<dbReference type="InterPro" id="IPR032632">
    <property type="entry name" value="Peptidase_M16_M"/>
</dbReference>
<dbReference type="PANTHER" id="PTHR43690:SF18">
    <property type="entry name" value="INSULIN-DEGRADING ENZYME-RELATED"/>
    <property type="match status" value="1"/>
</dbReference>
<dbReference type="PANTHER" id="PTHR43690">
    <property type="entry name" value="NARDILYSIN"/>
    <property type="match status" value="1"/>
</dbReference>
<dbReference type="Pfam" id="PF00675">
    <property type="entry name" value="Peptidase_M16"/>
    <property type="match status" value="1"/>
</dbReference>
<dbReference type="Pfam" id="PF05193">
    <property type="entry name" value="Peptidase_M16_C"/>
    <property type="match status" value="2"/>
</dbReference>
<dbReference type="Pfam" id="PF16187">
    <property type="entry name" value="Peptidase_M16_M"/>
    <property type="match status" value="1"/>
</dbReference>
<dbReference type="SUPFAM" id="SSF63411">
    <property type="entry name" value="LuxS/MPP-like metallohydrolase"/>
    <property type="match status" value="4"/>
</dbReference>
<dbReference type="PROSITE" id="PS00143">
    <property type="entry name" value="INSULINASE"/>
    <property type="match status" value="1"/>
</dbReference>
<name>NRDC_PONAB</name>
<organism>
    <name type="scientific">Pongo abelii</name>
    <name type="common">Sumatran orangutan</name>
    <name type="synonym">Pongo pygmaeus abelii</name>
    <dbReference type="NCBI Taxonomy" id="9601"/>
    <lineage>
        <taxon>Eukaryota</taxon>
        <taxon>Metazoa</taxon>
        <taxon>Chordata</taxon>
        <taxon>Craniata</taxon>
        <taxon>Vertebrata</taxon>
        <taxon>Euteleostomi</taxon>
        <taxon>Mammalia</taxon>
        <taxon>Eutheria</taxon>
        <taxon>Euarchontoglires</taxon>
        <taxon>Primates</taxon>
        <taxon>Haplorrhini</taxon>
        <taxon>Catarrhini</taxon>
        <taxon>Hominidae</taxon>
        <taxon>Pongo</taxon>
    </lineage>
</organism>
<feature type="signal peptide" evidence="4">
    <location>
        <begin position="1"/>
        <end position="20"/>
    </location>
</feature>
<feature type="chain" id="PRO_0000045848" description="Nardilysin" evidence="1">
    <location>
        <begin position="21"/>
        <end position="1152"/>
    </location>
</feature>
<feature type="region of interest" description="Disordered" evidence="6">
    <location>
        <begin position="81"/>
        <end position="108"/>
    </location>
</feature>
<feature type="region of interest" description="Disordered" evidence="6">
    <location>
        <begin position="133"/>
        <end position="208"/>
    </location>
</feature>
<feature type="compositionally biased region" description="Acidic residues" evidence="6">
    <location>
        <begin position="141"/>
        <end position="198"/>
    </location>
</feature>
<feature type="active site" description="Proton acceptor" evidence="5">
    <location>
        <position position="237"/>
    </location>
</feature>
<feature type="binding site" evidence="5">
    <location>
        <position position="234"/>
    </location>
    <ligand>
        <name>Zn(2+)</name>
        <dbReference type="ChEBI" id="CHEBI:29105"/>
    </ligand>
</feature>
<feature type="binding site" evidence="5">
    <location>
        <position position="238"/>
    </location>
    <ligand>
        <name>Zn(2+)</name>
        <dbReference type="ChEBI" id="CHEBI:29105"/>
    </ligand>
</feature>
<feature type="binding site" evidence="5">
    <location>
        <position position="315"/>
    </location>
    <ligand>
        <name>Zn(2+)</name>
        <dbReference type="ChEBI" id="CHEBI:29105"/>
    </ligand>
</feature>
<feature type="modified residue" description="Phosphoserine" evidence="2">
    <location>
        <position position="86"/>
    </location>
</feature>
<feature type="modified residue" description="Phosphoserine" evidence="2">
    <location>
        <position position="94"/>
    </location>
</feature>
<feature type="modified residue" description="Phosphoserine" evidence="2">
    <location>
        <position position="96"/>
    </location>
</feature>
<comment type="function">
    <text evidence="3">Cleaves peptide substrates on the N-terminus of arginine residues in dibasic pairs. Is a critical activator of BACE1- and ADAM17-mediated pro-neuregulin ectodomain shedding, involved in the positive regulation of axonal maturation and myelination. Required for proper functioning of 2-oxoglutarate dehydrogenase (OGDH) (By similarity).</text>
</comment>
<comment type="catalytic activity">
    <reaction>
        <text>Hydrolysis of polypeptides, preferably at -Xaa-|-Arg-Lys-, and less commonly at -Arg-|-Arg-Xaa-, in which Xaa is not Arg or Lys.</text>
        <dbReference type="EC" id="3.4.24.61"/>
    </reaction>
</comment>
<comment type="cofactor">
    <cofactor evidence="1">
        <name>Zn(2+)</name>
        <dbReference type="ChEBI" id="CHEBI:29105"/>
    </cofactor>
    <text evidence="1">Binds 1 zinc ion per subunit.</text>
</comment>
<comment type="subunit">
    <text evidence="3">Interacts with BACE1 and NRG1.</text>
</comment>
<comment type="subcellular location">
    <subcellularLocation>
        <location evidence="2">Mitochondrion</location>
    </subcellularLocation>
    <subcellularLocation>
        <location evidence="3">Cell projection</location>
        <location evidence="3">Dendrite</location>
    </subcellularLocation>
</comment>
<comment type="similarity">
    <text evidence="7">Belongs to the peptidase M16 family.</text>
</comment>
<evidence type="ECO:0000250" key="1"/>
<evidence type="ECO:0000250" key="2">
    <source>
        <dbReference type="UniProtKB" id="O43847"/>
    </source>
</evidence>
<evidence type="ECO:0000250" key="3">
    <source>
        <dbReference type="UniProtKB" id="Q8BHG1"/>
    </source>
</evidence>
<evidence type="ECO:0000255" key="4"/>
<evidence type="ECO:0000255" key="5">
    <source>
        <dbReference type="PROSITE-ProRule" id="PRU10096"/>
    </source>
</evidence>
<evidence type="ECO:0000256" key="6">
    <source>
        <dbReference type="SAM" id="MobiDB-lite"/>
    </source>
</evidence>
<evidence type="ECO:0000305" key="7"/>